<evidence type="ECO:0000255" key="1">
    <source>
        <dbReference type="HAMAP-Rule" id="MF_01959"/>
    </source>
</evidence>
<evidence type="ECO:0000256" key="2">
    <source>
        <dbReference type="SAM" id="MobiDB-lite"/>
    </source>
</evidence>
<proteinExistence type="inferred from homology"/>
<feature type="chain" id="PRO_1000189063" description="Cytochrome c-type biogenesis protein CcmE">
    <location>
        <begin position="1"/>
        <end position="164"/>
    </location>
</feature>
<feature type="topological domain" description="Cytoplasmic" evidence="1">
    <location>
        <begin position="1"/>
        <end position="8"/>
    </location>
</feature>
<feature type="transmembrane region" description="Helical; Signal-anchor for type II membrane protein" evidence="1">
    <location>
        <begin position="9"/>
        <end position="29"/>
    </location>
</feature>
<feature type="topological domain" description="Periplasmic" evidence="1">
    <location>
        <begin position="30"/>
        <end position="164"/>
    </location>
</feature>
<feature type="region of interest" description="Disordered" evidence="2">
    <location>
        <begin position="140"/>
        <end position="164"/>
    </location>
</feature>
<feature type="binding site" description="covalent" evidence="1">
    <location>
        <position position="130"/>
    </location>
    <ligand>
        <name>heme</name>
        <dbReference type="ChEBI" id="CHEBI:30413"/>
    </ligand>
</feature>
<feature type="binding site" description="axial binding residue" evidence="1">
    <location>
        <position position="134"/>
    </location>
    <ligand>
        <name>heme</name>
        <dbReference type="ChEBI" id="CHEBI:30413"/>
    </ligand>
    <ligandPart>
        <name>Fe</name>
        <dbReference type="ChEBI" id="CHEBI:18248"/>
    </ligandPart>
</feature>
<gene>
    <name evidence="1" type="primary">ccmE</name>
    <name evidence="1" type="synonym">cycJ</name>
    <name type="ordered locus">YpAngola_A0391</name>
</gene>
<organism>
    <name type="scientific">Yersinia pestis bv. Antiqua (strain Angola)</name>
    <dbReference type="NCBI Taxonomy" id="349746"/>
    <lineage>
        <taxon>Bacteria</taxon>
        <taxon>Pseudomonadati</taxon>
        <taxon>Pseudomonadota</taxon>
        <taxon>Gammaproteobacteria</taxon>
        <taxon>Enterobacterales</taxon>
        <taxon>Yersiniaceae</taxon>
        <taxon>Yersinia</taxon>
    </lineage>
</organism>
<accession>A9R7X6</accession>
<reference key="1">
    <citation type="journal article" date="2010" name="J. Bacteriol.">
        <title>Genome sequence of the deep-rooted Yersinia pestis strain Angola reveals new insights into the evolution and pangenome of the plague bacterium.</title>
        <authorList>
            <person name="Eppinger M."/>
            <person name="Worsham P.L."/>
            <person name="Nikolich M.P."/>
            <person name="Riley D.R."/>
            <person name="Sebastian Y."/>
            <person name="Mou S."/>
            <person name="Achtman M."/>
            <person name="Lindler L.E."/>
            <person name="Ravel J."/>
        </authorList>
    </citation>
    <scope>NUCLEOTIDE SEQUENCE [LARGE SCALE GENOMIC DNA]</scope>
    <source>
        <strain>Angola</strain>
    </source>
</reference>
<comment type="function">
    <text evidence="1">Heme chaperone required for the biogenesis of c-type cytochromes. Transiently binds heme delivered by CcmC and transfers the heme to apo-cytochromes in a process facilitated by CcmF and CcmH.</text>
</comment>
<comment type="subcellular location">
    <subcellularLocation>
        <location evidence="1">Cell inner membrane</location>
        <topology evidence="1">Single-pass type II membrane protein</topology>
        <orientation evidence="1">Periplasmic side</orientation>
    </subcellularLocation>
</comment>
<comment type="similarity">
    <text evidence="1">Belongs to the CcmE/CycJ family.</text>
</comment>
<keyword id="KW-0997">Cell inner membrane</keyword>
<keyword id="KW-1003">Cell membrane</keyword>
<keyword id="KW-0201">Cytochrome c-type biogenesis</keyword>
<keyword id="KW-0349">Heme</keyword>
<keyword id="KW-0408">Iron</keyword>
<keyword id="KW-0472">Membrane</keyword>
<keyword id="KW-0479">Metal-binding</keyword>
<keyword id="KW-0735">Signal-anchor</keyword>
<keyword id="KW-0812">Transmembrane</keyword>
<keyword id="KW-1133">Transmembrane helix</keyword>
<name>CCME_YERPG</name>
<protein>
    <recommendedName>
        <fullName evidence="1">Cytochrome c-type biogenesis protein CcmE</fullName>
    </recommendedName>
    <alternativeName>
        <fullName evidence="1">Cytochrome c maturation protein E</fullName>
    </alternativeName>
    <alternativeName>
        <fullName evidence="1">Heme chaperone CcmE</fullName>
    </alternativeName>
</protein>
<dbReference type="EMBL" id="CP000901">
    <property type="protein sequence ID" value="ABX86786.1"/>
    <property type="molecule type" value="Genomic_DNA"/>
</dbReference>
<dbReference type="RefSeq" id="WP_002209697.1">
    <property type="nucleotide sequence ID" value="NZ_CP009935.1"/>
</dbReference>
<dbReference type="SMR" id="A9R7X6"/>
<dbReference type="GeneID" id="57975951"/>
<dbReference type="KEGG" id="ypg:YpAngola_A0391"/>
<dbReference type="PATRIC" id="fig|349746.12.peg.1340"/>
<dbReference type="GO" id="GO:0005886">
    <property type="term" value="C:plasma membrane"/>
    <property type="evidence" value="ECO:0007669"/>
    <property type="project" value="UniProtKB-SubCell"/>
</dbReference>
<dbReference type="GO" id="GO:0020037">
    <property type="term" value="F:heme binding"/>
    <property type="evidence" value="ECO:0007669"/>
    <property type="project" value="InterPro"/>
</dbReference>
<dbReference type="GO" id="GO:0046872">
    <property type="term" value="F:metal ion binding"/>
    <property type="evidence" value="ECO:0007669"/>
    <property type="project" value="UniProtKB-KW"/>
</dbReference>
<dbReference type="GO" id="GO:0017004">
    <property type="term" value="P:cytochrome complex assembly"/>
    <property type="evidence" value="ECO:0007669"/>
    <property type="project" value="UniProtKB-KW"/>
</dbReference>
<dbReference type="FunFam" id="2.40.50.140:FF:000104">
    <property type="entry name" value="Cytochrome c-type biogenesis protein CcmE"/>
    <property type="match status" value="1"/>
</dbReference>
<dbReference type="Gene3D" id="2.40.50.140">
    <property type="entry name" value="Nucleic acid-binding proteins"/>
    <property type="match status" value="1"/>
</dbReference>
<dbReference type="HAMAP" id="MF_01959">
    <property type="entry name" value="CcmE"/>
    <property type="match status" value="1"/>
</dbReference>
<dbReference type="InterPro" id="IPR004329">
    <property type="entry name" value="CcmE"/>
</dbReference>
<dbReference type="InterPro" id="IPR036127">
    <property type="entry name" value="CcmE-like_sf"/>
</dbReference>
<dbReference type="InterPro" id="IPR012340">
    <property type="entry name" value="NA-bd_OB-fold"/>
</dbReference>
<dbReference type="NCBIfam" id="NF009635">
    <property type="entry name" value="PRK13150.1"/>
    <property type="match status" value="1"/>
</dbReference>
<dbReference type="NCBIfam" id="NF009638">
    <property type="entry name" value="PRK13165.1"/>
    <property type="match status" value="1"/>
</dbReference>
<dbReference type="NCBIfam" id="NF009727">
    <property type="entry name" value="PRK13254.1-1"/>
    <property type="match status" value="1"/>
</dbReference>
<dbReference type="NCBIfam" id="NF009729">
    <property type="entry name" value="PRK13254.1-3"/>
    <property type="match status" value="1"/>
</dbReference>
<dbReference type="NCBIfam" id="NF009731">
    <property type="entry name" value="PRK13254.1-5"/>
    <property type="match status" value="1"/>
</dbReference>
<dbReference type="PANTHER" id="PTHR34128">
    <property type="entry name" value="CYTOCHROME C-TYPE BIOGENESIS PROTEIN CCME HOMOLOG, MITOCHONDRIAL"/>
    <property type="match status" value="1"/>
</dbReference>
<dbReference type="PANTHER" id="PTHR34128:SF2">
    <property type="entry name" value="CYTOCHROME C-TYPE BIOGENESIS PROTEIN CCME HOMOLOG, MITOCHONDRIAL"/>
    <property type="match status" value="1"/>
</dbReference>
<dbReference type="Pfam" id="PF03100">
    <property type="entry name" value="CcmE"/>
    <property type="match status" value="1"/>
</dbReference>
<dbReference type="SUPFAM" id="SSF82093">
    <property type="entry name" value="Heme chaperone CcmE"/>
    <property type="match status" value="1"/>
</dbReference>
<sequence length="164" mass="18033">MNPRRKSRLYLAMVVLIGISLTTTLVLYALRSNIDLFYTPGEILQGKGERHEKPAIGQRLRIGGMVMPGSVQRDAKTLEMSFQVYDARGAVTVTYTGILPDLFREGQGVVAQGVFAEGNTVHAKEVLAKHDEKYTPPEVEEAMKENHSRPAAAYRGTNTTGNAL</sequence>